<proteinExistence type="inferred from homology"/>
<accession>Q1IV16</accession>
<keyword id="KW-0963">Cytoplasm</keyword>
<keyword id="KW-0269">Exonuclease</keyword>
<keyword id="KW-0378">Hydrolase</keyword>
<keyword id="KW-0540">Nuclease</keyword>
<keyword id="KW-1185">Reference proteome</keyword>
<comment type="function">
    <text evidence="1">Bidirectionally degrades single-stranded DNA into large acid-insoluble oligonucleotides, which are then degraded further into small acid-soluble oligonucleotides.</text>
</comment>
<comment type="catalytic activity">
    <reaction evidence="1">
        <text>Exonucleolytic cleavage in either 5'- to 3'- or 3'- to 5'-direction to yield nucleoside 5'-phosphates.</text>
        <dbReference type="EC" id="3.1.11.6"/>
    </reaction>
</comment>
<comment type="subunit">
    <text evidence="1">Heterooligomer composed of large and small subunits.</text>
</comment>
<comment type="subcellular location">
    <subcellularLocation>
        <location evidence="1">Cytoplasm</location>
    </subcellularLocation>
</comment>
<comment type="similarity">
    <text evidence="1">Belongs to the XseA family.</text>
</comment>
<sequence length="455" mass="50814">MSFSDQLGFTFSAPQRRIWQVRDIVSAVRAALEREYADVWVEGEISNFRPADSGHLYFSLKDESTQLRIVMFRSQARLLKFRPENGLKVIARGKVTLYEGRGELQLMAEYLEPQGAGALQIAFEQLKAKLQAEGLFARERKKPIPALPKKIGVVTSPRGAVIQDILNVLRRRHNSVHVLIFPAQVQGETAASEVASGVRYFNKAANVEVIIVARGGGSIEDLAAFNDEGLARSIATSTIPVISAVGHETDFTICDFVADLRAPTPSAAAELVIRSKQEVDERLTALSTHLARALRVRLLEYEKKLDRLARHGAFGGMQTAIARRQQRVDDLAFRLSVAQTNVFRQLHRRLDVASTRVRHHDLRSRFAAEHRELSARVEKLAATLRANLMRRRTRIERLAGQLQGLSPISILERGYALVFDAEGRLLKDARQVREGNTIRAQLALGQISAVVKKPE</sequence>
<evidence type="ECO:0000255" key="1">
    <source>
        <dbReference type="HAMAP-Rule" id="MF_00378"/>
    </source>
</evidence>
<dbReference type="EC" id="3.1.11.6" evidence="1"/>
<dbReference type="EMBL" id="CP000360">
    <property type="protein sequence ID" value="ABF39284.1"/>
    <property type="molecule type" value="Genomic_DNA"/>
</dbReference>
<dbReference type="RefSeq" id="WP_011521086.1">
    <property type="nucleotide sequence ID" value="NC_008009.1"/>
</dbReference>
<dbReference type="SMR" id="Q1IV16"/>
<dbReference type="STRING" id="204669.Acid345_0279"/>
<dbReference type="EnsemblBacteria" id="ABF39284">
    <property type="protein sequence ID" value="ABF39284"/>
    <property type="gene ID" value="Acid345_0279"/>
</dbReference>
<dbReference type="KEGG" id="aba:Acid345_0279"/>
<dbReference type="eggNOG" id="COG1570">
    <property type="taxonomic scope" value="Bacteria"/>
</dbReference>
<dbReference type="HOGENOM" id="CLU_023625_2_2_0"/>
<dbReference type="OrthoDB" id="9802795at2"/>
<dbReference type="Proteomes" id="UP000002432">
    <property type="component" value="Chromosome"/>
</dbReference>
<dbReference type="GO" id="GO:0005737">
    <property type="term" value="C:cytoplasm"/>
    <property type="evidence" value="ECO:0007669"/>
    <property type="project" value="UniProtKB-SubCell"/>
</dbReference>
<dbReference type="GO" id="GO:0009318">
    <property type="term" value="C:exodeoxyribonuclease VII complex"/>
    <property type="evidence" value="ECO:0007669"/>
    <property type="project" value="InterPro"/>
</dbReference>
<dbReference type="GO" id="GO:0008855">
    <property type="term" value="F:exodeoxyribonuclease VII activity"/>
    <property type="evidence" value="ECO:0007669"/>
    <property type="project" value="UniProtKB-UniRule"/>
</dbReference>
<dbReference type="GO" id="GO:0003676">
    <property type="term" value="F:nucleic acid binding"/>
    <property type="evidence" value="ECO:0007669"/>
    <property type="project" value="InterPro"/>
</dbReference>
<dbReference type="GO" id="GO:0006308">
    <property type="term" value="P:DNA catabolic process"/>
    <property type="evidence" value="ECO:0007669"/>
    <property type="project" value="UniProtKB-UniRule"/>
</dbReference>
<dbReference type="CDD" id="cd04489">
    <property type="entry name" value="ExoVII_LU_OBF"/>
    <property type="match status" value="1"/>
</dbReference>
<dbReference type="HAMAP" id="MF_00378">
    <property type="entry name" value="Exonuc_7_L"/>
    <property type="match status" value="1"/>
</dbReference>
<dbReference type="InterPro" id="IPR003753">
    <property type="entry name" value="Exonuc_VII_L"/>
</dbReference>
<dbReference type="InterPro" id="IPR020579">
    <property type="entry name" value="Exonuc_VII_lsu_C"/>
</dbReference>
<dbReference type="InterPro" id="IPR025824">
    <property type="entry name" value="OB-fold_nuc-bd_dom"/>
</dbReference>
<dbReference type="NCBIfam" id="TIGR00237">
    <property type="entry name" value="xseA"/>
    <property type="match status" value="1"/>
</dbReference>
<dbReference type="PANTHER" id="PTHR30008">
    <property type="entry name" value="EXODEOXYRIBONUCLEASE 7 LARGE SUBUNIT"/>
    <property type="match status" value="1"/>
</dbReference>
<dbReference type="PANTHER" id="PTHR30008:SF0">
    <property type="entry name" value="EXODEOXYRIBONUCLEASE 7 LARGE SUBUNIT"/>
    <property type="match status" value="1"/>
</dbReference>
<dbReference type="Pfam" id="PF02601">
    <property type="entry name" value="Exonuc_VII_L"/>
    <property type="match status" value="1"/>
</dbReference>
<dbReference type="Pfam" id="PF13742">
    <property type="entry name" value="tRNA_anti_2"/>
    <property type="match status" value="1"/>
</dbReference>
<organism>
    <name type="scientific">Koribacter versatilis (strain Ellin345)</name>
    <dbReference type="NCBI Taxonomy" id="204669"/>
    <lineage>
        <taxon>Bacteria</taxon>
        <taxon>Pseudomonadati</taxon>
        <taxon>Acidobacteriota</taxon>
        <taxon>Terriglobia</taxon>
        <taxon>Terriglobales</taxon>
        <taxon>Candidatus Korobacteraceae</taxon>
        <taxon>Candidatus Korobacter</taxon>
    </lineage>
</organism>
<gene>
    <name evidence="1" type="primary">xseA</name>
    <name type="ordered locus">Acid345_0279</name>
</gene>
<name>EX7L_KORVE</name>
<feature type="chain" id="PRO_0000273637" description="Exodeoxyribonuclease 7 large subunit">
    <location>
        <begin position="1"/>
        <end position="455"/>
    </location>
</feature>
<reference key="1">
    <citation type="journal article" date="2009" name="Appl. Environ. Microbiol.">
        <title>Three genomes from the phylum Acidobacteria provide insight into the lifestyles of these microorganisms in soils.</title>
        <authorList>
            <person name="Ward N.L."/>
            <person name="Challacombe J.F."/>
            <person name="Janssen P.H."/>
            <person name="Henrissat B."/>
            <person name="Coutinho P.M."/>
            <person name="Wu M."/>
            <person name="Xie G."/>
            <person name="Haft D.H."/>
            <person name="Sait M."/>
            <person name="Badger J."/>
            <person name="Barabote R.D."/>
            <person name="Bradley B."/>
            <person name="Brettin T.S."/>
            <person name="Brinkac L.M."/>
            <person name="Bruce D."/>
            <person name="Creasy T."/>
            <person name="Daugherty S.C."/>
            <person name="Davidsen T.M."/>
            <person name="DeBoy R.T."/>
            <person name="Detter J.C."/>
            <person name="Dodson R.J."/>
            <person name="Durkin A.S."/>
            <person name="Ganapathy A."/>
            <person name="Gwinn-Giglio M."/>
            <person name="Han C.S."/>
            <person name="Khouri H."/>
            <person name="Kiss H."/>
            <person name="Kothari S.P."/>
            <person name="Madupu R."/>
            <person name="Nelson K.E."/>
            <person name="Nelson W.C."/>
            <person name="Paulsen I."/>
            <person name="Penn K."/>
            <person name="Ren Q."/>
            <person name="Rosovitz M.J."/>
            <person name="Selengut J.D."/>
            <person name="Shrivastava S."/>
            <person name="Sullivan S.A."/>
            <person name="Tapia R."/>
            <person name="Thompson L.S."/>
            <person name="Watkins K.L."/>
            <person name="Yang Q."/>
            <person name="Yu C."/>
            <person name="Zafar N."/>
            <person name="Zhou L."/>
            <person name="Kuske C.R."/>
        </authorList>
    </citation>
    <scope>NUCLEOTIDE SEQUENCE [LARGE SCALE GENOMIC DNA]</scope>
    <source>
        <strain>Ellin345</strain>
    </source>
</reference>
<protein>
    <recommendedName>
        <fullName evidence="1">Exodeoxyribonuclease 7 large subunit</fullName>
        <ecNumber evidence="1">3.1.11.6</ecNumber>
    </recommendedName>
    <alternativeName>
        <fullName evidence="1">Exodeoxyribonuclease VII large subunit</fullName>
        <shortName evidence="1">Exonuclease VII large subunit</shortName>
    </alternativeName>
</protein>